<sequence>MKTFMAKKEEIKREWYVVDAKGKVLGRLASEIAKILRGKHKPIYTPHVDTGDFVIVVNAKDVVLTGKKEQQKIYFFHSGYPGGHRLISAKDMRAKSPEKMIYLAVKGMLPKGPLGRKMLKKLKVYAGPEHPHQAQKPKELNI</sequence>
<dbReference type="EMBL" id="CP001146">
    <property type="protein sequence ID" value="ACI18927.1"/>
    <property type="molecule type" value="Genomic_DNA"/>
</dbReference>
<dbReference type="RefSeq" id="WP_012547559.1">
    <property type="nucleotide sequence ID" value="NC_011297.1"/>
</dbReference>
<dbReference type="SMR" id="B5YDX6"/>
<dbReference type="STRING" id="309799.DICTH_0870"/>
<dbReference type="PaxDb" id="309799-DICTH_0870"/>
<dbReference type="KEGG" id="dth:DICTH_0870"/>
<dbReference type="eggNOG" id="COG0102">
    <property type="taxonomic scope" value="Bacteria"/>
</dbReference>
<dbReference type="HOGENOM" id="CLU_082184_2_2_0"/>
<dbReference type="OrthoDB" id="9801330at2"/>
<dbReference type="Proteomes" id="UP000001733">
    <property type="component" value="Chromosome"/>
</dbReference>
<dbReference type="GO" id="GO:0022625">
    <property type="term" value="C:cytosolic large ribosomal subunit"/>
    <property type="evidence" value="ECO:0007669"/>
    <property type="project" value="TreeGrafter"/>
</dbReference>
<dbReference type="GO" id="GO:0003729">
    <property type="term" value="F:mRNA binding"/>
    <property type="evidence" value="ECO:0007669"/>
    <property type="project" value="TreeGrafter"/>
</dbReference>
<dbReference type="GO" id="GO:0003735">
    <property type="term" value="F:structural constituent of ribosome"/>
    <property type="evidence" value="ECO:0007669"/>
    <property type="project" value="InterPro"/>
</dbReference>
<dbReference type="GO" id="GO:0017148">
    <property type="term" value="P:negative regulation of translation"/>
    <property type="evidence" value="ECO:0007669"/>
    <property type="project" value="TreeGrafter"/>
</dbReference>
<dbReference type="GO" id="GO:0006412">
    <property type="term" value="P:translation"/>
    <property type="evidence" value="ECO:0007669"/>
    <property type="project" value="UniProtKB-UniRule"/>
</dbReference>
<dbReference type="CDD" id="cd00392">
    <property type="entry name" value="Ribosomal_L13"/>
    <property type="match status" value="1"/>
</dbReference>
<dbReference type="FunFam" id="3.90.1180.10:FF:000001">
    <property type="entry name" value="50S ribosomal protein L13"/>
    <property type="match status" value="1"/>
</dbReference>
<dbReference type="Gene3D" id="3.90.1180.10">
    <property type="entry name" value="Ribosomal protein L13"/>
    <property type="match status" value="1"/>
</dbReference>
<dbReference type="HAMAP" id="MF_01366">
    <property type="entry name" value="Ribosomal_uL13"/>
    <property type="match status" value="1"/>
</dbReference>
<dbReference type="InterPro" id="IPR005822">
    <property type="entry name" value="Ribosomal_uL13"/>
</dbReference>
<dbReference type="InterPro" id="IPR005823">
    <property type="entry name" value="Ribosomal_uL13_bac-type"/>
</dbReference>
<dbReference type="InterPro" id="IPR023563">
    <property type="entry name" value="Ribosomal_uL13_CS"/>
</dbReference>
<dbReference type="InterPro" id="IPR036899">
    <property type="entry name" value="Ribosomal_uL13_sf"/>
</dbReference>
<dbReference type="NCBIfam" id="TIGR01066">
    <property type="entry name" value="rplM_bact"/>
    <property type="match status" value="1"/>
</dbReference>
<dbReference type="PANTHER" id="PTHR11545:SF2">
    <property type="entry name" value="LARGE RIBOSOMAL SUBUNIT PROTEIN UL13M"/>
    <property type="match status" value="1"/>
</dbReference>
<dbReference type="PANTHER" id="PTHR11545">
    <property type="entry name" value="RIBOSOMAL PROTEIN L13"/>
    <property type="match status" value="1"/>
</dbReference>
<dbReference type="Pfam" id="PF00572">
    <property type="entry name" value="Ribosomal_L13"/>
    <property type="match status" value="1"/>
</dbReference>
<dbReference type="PIRSF" id="PIRSF002181">
    <property type="entry name" value="Ribosomal_L13"/>
    <property type="match status" value="1"/>
</dbReference>
<dbReference type="SUPFAM" id="SSF52161">
    <property type="entry name" value="Ribosomal protein L13"/>
    <property type="match status" value="1"/>
</dbReference>
<dbReference type="PROSITE" id="PS00783">
    <property type="entry name" value="RIBOSOMAL_L13"/>
    <property type="match status" value="1"/>
</dbReference>
<organism>
    <name type="scientific">Dictyoglomus thermophilum (strain ATCC 35947 / DSM 3960 / H-6-12)</name>
    <dbReference type="NCBI Taxonomy" id="309799"/>
    <lineage>
        <taxon>Bacteria</taxon>
        <taxon>Pseudomonadati</taxon>
        <taxon>Dictyoglomota</taxon>
        <taxon>Dictyoglomia</taxon>
        <taxon>Dictyoglomales</taxon>
        <taxon>Dictyoglomaceae</taxon>
        <taxon>Dictyoglomus</taxon>
    </lineage>
</organism>
<protein>
    <recommendedName>
        <fullName evidence="1">Large ribosomal subunit protein uL13</fullName>
    </recommendedName>
    <alternativeName>
        <fullName evidence="2">50S ribosomal protein L13</fullName>
    </alternativeName>
</protein>
<accession>B5YDX6</accession>
<reference key="1">
    <citation type="journal article" date="2014" name="Genome Announc.">
        <title>Complete Genome Sequence of the Extreme Thermophile Dictyoglomus thermophilum H-6-12.</title>
        <authorList>
            <person name="Coil D.A."/>
            <person name="Badger J.H."/>
            <person name="Forberger H.C."/>
            <person name="Riggs F."/>
            <person name="Madupu R."/>
            <person name="Fedorova N."/>
            <person name="Ward N."/>
            <person name="Robb F.T."/>
            <person name="Eisen J.A."/>
        </authorList>
    </citation>
    <scope>NUCLEOTIDE SEQUENCE [LARGE SCALE GENOMIC DNA]</scope>
    <source>
        <strain>ATCC 35947 / DSM 3960 / H-6-12</strain>
    </source>
</reference>
<name>RL13_DICT6</name>
<keyword id="KW-0687">Ribonucleoprotein</keyword>
<keyword id="KW-0689">Ribosomal protein</keyword>
<feature type="chain" id="PRO_1000144118" description="Large ribosomal subunit protein uL13">
    <location>
        <begin position="1"/>
        <end position="142"/>
    </location>
</feature>
<comment type="function">
    <text evidence="1">This protein is one of the early assembly proteins of the 50S ribosomal subunit, although it is not seen to bind rRNA by itself. It is important during the early stages of 50S assembly.</text>
</comment>
<comment type="subunit">
    <text evidence="1">Part of the 50S ribosomal subunit.</text>
</comment>
<comment type="similarity">
    <text evidence="1">Belongs to the universal ribosomal protein uL13 family.</text>
</comment>
<gene>
    <name evidence="1" type="primary">rplM</name>
    <name type="ordered locus">DICTH_0870</name>
</gene>
<proteinExistence type="inferred from homology"/>
<evidence type="ECO:0000255" key="1">
    <source>
        <dbReference type="HAMAP-Rule" id="MF_01366"/>
    </source>
</evidence>
<evidence type="ECO:0000305" key="2"/>